<accession>P9WJU5</accession>
<accession>L0TFD0</accession>
<accession>O07800</accession>
<dbReference type="EMBL" id="AL123456">
    <property type="protein sequence ID" value="CCP46652.1"/>
    <property type="molecule type" value="Genomic_DNA"/>
</dbReference>
<dbReference type="PIR" id="C70522">
    <property type="entry name" value="C70522"/>
</dbReference>
<dbReference type="RefSeq" id="NP_218340.1">
    <property type="nucleotide sequence ID" value="NC_000962.3"/>
</dbReference>
<dbReference type="RefSeq" id="WP_003899710.1">
    <property type="nucleotide sequence ID" value="NZ_NVQJ01000022.1"/>
</dbReference>
<dbReference type="SMR" id="P9WJU5"/>
<dbReference type="STRING" id="83332.Rv3823c"/>
<dbReference type="PaxDb" id="83332-Rv3823c"/>
<dbReference type="DNASU" id="886145"/>
<dbReference type="GeneID" id="886145"/>
<dbReference type="KEGG" id="mtu:Rv3823c"/>
<dbReference type="KEGG" id="mtv:RVBD_3823c"/>
<dbReference type="PATRIC" id="fig|83332.111.peg.4250"/>
<dbReference type="TubercuList" id="Rv3823c"/>
<dbReference type="eggNOG" id="COG1511">
    <property type="taxonomic scope" value="Bacteria"/>
</dbReference>
<dbReference type="eggNOG" id="COG2409">
    <property type="taxonomic scope" value="Bacteria"/>
</dbReference>
<dbReference type="InParanoid" id="P9WJU5"/>
<dbReference type="OrthoDB" id="2365435at2"/>
<dbReference type="PhylomeDB" id="P9WJU5"/>
<dbReference type="Proteomes" id="UP000001584">
    <property type="component" value="Chromosome"/>
</dbReference>
<dbReference type="GO" id="GO:0005829">
    <property type="term" value="C:cytosol"/>
    <property type="evidence" value="ECO:0007005"/>
    <property type="project" value="MTBBASE"/>
</dbReference>
<dbReference type="GO" id="GO:0009274">
    <property type="term" value="C:peptidoglycan-based cell wall"/>
    <property type="evidence" value="ECO:0007005"/>
    <property type="project" value="MTBBASE"/>
</dbReference>
<dbReference type="GO" id="GO:0005886">
    <property type="term" value="C:plasma membrane"/>
    <property type="evidence" value="ECO:0007669"/>
    <property type="project" value="UniProtKB-SubCell"/>
</dbReference>
<dbReference type="GO" id="GO:0071555">
    <property type="term" value="P:cell wall organization"/>
    <property type="evidence" value="ECO:0007669"/>
    <property type="project" value="UniProtKB-KW"/>
</dbReference>
<dbReference type="GO" id="GO:0006869">
    <property type="term" value="P:lipid transport"/>
    <property type="evidence" value="ECO:0007669"/>
    <property type="project" value="UniProtKB-KW"/>
</dbReference>
<dbReference type="GO" id="GO:0046506">
    <property type="term" value="P:sulfolipid biosynthetic process"/>
    <property type="evidence" value="ECO:0000315"/>
    <property type="project" value="MTBBASE"/>
</dbReference>
<dbReference type="FunFam" id="1.20.1640.10:FF:000018">
    <property type="entry name" value="Transmembrane transport protein MmpL10"/>
    <property type="match status" value="1"/>
</dbReference>
<dbReference type="FunFam" id="1.20.1640.10:FF:000020">
    <property type="entry name" value="Transmembrane transport protein MmpL10"/>
    <property type="match status" value="1"/>
</dbReference>
<dbReference type="Gene3D" id="1.20.1640.10">
    <property type="entry name" value="Multidrug efflux transporter AcrB transmembrane domain"/>
    <property type="match status" value="2"/>
</dbReference>
<dbReference type="InterPro" id="IPR004869">
    <property type="entry name" value="MMPL_dom"/>
</dbReference>
<dbReference type="InterPro" id="IPR050545">
    <property type="entry name" value="Mycobact_MmpL"/>
</dbReference>
<dbReference type="InterPro" id="IPR000731">
    <property type="entry name" value="SSD"/>
</dbReference>
<dbReference type="PANTHER" id="PTHR33406">
    <property type="entry name" value="MEMBRANE PROTEIN MJ1562-RELATED"/>
    <property type="match status" value="1"/>
</dbReference>
<dbReference type="PANTHER" id="PTHR33406:SF6">
    <property type="entry name" value="MEMBRANE PROTEIN YDGH-RELATED"/>
    <property type="match status" value="1"/>
</dbReference>
<dbReference type="Pfam" id="PF03176">
    <property type="entry name" value="MMPL"/>
    <property type="match status" value="2"/>
</dbReference>
<dbReference type="SUPFAM" id="SSF82866">
    <property type="entry name" value="Multidrug efflux transporter AcrB transmembrane domain"/>
    <property type="match status" value="2"/>
</dbReference>
<dbReference type="PROSITE" id="PS50156">
    <property type="entry name" value="SSD"/>
    <property type="match status" value="1"/>
</dbReference>
<proteinExistence type="evidence at protein level"/>
<gene>
    <name type="primary">mmpL8</name>
    <name type="ordered locus">Rv3823c</name>
    <name type="ORF">MTCY409.07</name>
</gene>
<feature type="chain" id="PRO_0000103572" description="Sulfolipid-1 exporter MmpL8">
    <location>
        <begin position="1"/>
        <end position="1089"/>
    </location>
</feature>
<feature type="transmembrane region" description="Helical" evidence="1">
    <location>
        <begin position="44"/>
        <end position="64"/>
    </location>
</feature>
<feature type="transmembrane region" description="Helical" evidence="1">
    <location>
        <begin position="222"/>
        <end position="242"/>
    </location>
</feature>
<feature type="transmembrane region" description="Helical" evidence="1">
    <location>
        <begin position="257"/>
        <end position="277"/>
    </location>
</feature>
<feature type="transmembrane region" description="Helical" evidence="1">
    <location>
        <begin position="316"/>
        <end position="336"/>
    </location>
</feature>
<feature type="transmembrane region" description="Helical" evidence="1">
    <location>
        <begin position="349"/>
        <end position="369"/>
    </location>
</feature>
<feature type="transmembrane region" description="Helical" evidence="1">
    <location>
        <begin position="400"/>
        <end position="420"/>
    </location>
</feature>
<feature type="transmembrane region" description="Helical" evidence="1">
    <location>
        <begin position="555"/>
        <end position="575"/>
    </location>
</feature>
<feature type="transmembrane region" description="Helical" evidence="1">
    <location>
        <begin position="874"/>
        <end position="894"/>
    </location>
</feature>
<feature type="transmembrane region" description="Helical" evidence="1">
    <location>
        <begin position="898"/>
        <end position="918"/>
    </location>
</feature>
<feature type="transmembrane region" description="Helical" evidence="1">
    <location>
        <begin position="930"/>
        <end position="950"/>
    </location>
</feature>
<feature type="transmembrane region" description="Helical" evidence="1">
    <location>
        <begin position="973"/>
        <end position="993"/>
    </location>
</feature>
<feature type="transmembrane region" description="Helical" evidence="1">
    <location>
        <begin position="996"/>
        <end position="1016"/>
    </location>
</feature>
<feature type="region of interest" description="Disordered" evidence="2">
    <location>
        <begin position="1"/>
        <end position="26"/>
    </location>
</feature>
<feature type="region of interest" description="Disordered" evidence="2">
    <location>
        <begin position="1056"/>
        <end position="1078"/>
    </location>
</feature>
<feature type="compositionally biased region" description="Acidic residues" evidence="2">
    <location>
        <begin position="1066"/>
        <end position="1078"/>
    </location>
</feature>
<sequence length="1089" mass="115998">MCDVLMQPVRTPRPSTNLRSKPLRPTGDGGVFPRLGRLIVRRPWVVIAFWVALAGLLAPTVPSLDAISQRHPVAILPSDAPVLVSTRQMTAAFREAGLQSVAVVVLSDAKGLGAADERSYKELVDALRRDTRDVVMLQDFVTTPPLRELMTSKDNQAWILPVGLPGDLGSTQSKQAYARVADIVEHQVAGSTLTANLTGPAATVADLNLTGQRDRSRIEFAITILLLVILLIIYGNPITMVLPLITIGMSVVVAQRLVAIAGLAGLGIANQSIIFMSGMMVGAGTDYAVFLISRYHDYLRQGADSDQAVKKALTSIGKVIAASAATVAITFLGMVFTQLGILKTVGPMLGISVAVVFFAAVTLLPALMVLTGRRGWIAPRRDLTRRFWRSSGVHIVRRPKTHLLASALVLVILAGCAGLARYNYDDRKTLPASVESSIGYAALDKHFPSNLIIPEYLFIQSSTDLRTPKALADLEQMVQRVSQVPGVAMVRGITRPAGRSLEQARTSWQAGEVGSKLDEGSKQIAVHTGDIDKLAGGANLMASKLGDVRAQVNRAISTVGGLIDALAYLQDLLGGNRVLGELEGAEKLIGSMRALGDTIDADASFVANNTEWASPVLGALDSSPMCTADPACASARTELQRLVTARDDGTLAKISELARQLQATRAVQTLAATVSGLRGALATVIRAMGSLGMSSPGGVRSKINLVNKGVNDLADGSRQLAEGVQLLVDQVKKMGFGLGEASAFLLAMKDTATTPAMAGFYIPPELLSYATGESVKAETMPSEYRDLLGGLNVDQLKKVAAAFISPDGHSIRYLIQTDLNPFSTAAMDQIDAITAAARGAQPNTALADAKVSVVGLPVVLKDTRDYSDHDLRLIIAMTVCIVLLILIVLLRAIVAPLYLIGSVIVSYLAALGIGVIVFQFLLGQEMHWSIPGLTFVILVAVGADYNMLLISRLREEAVLGVRSGVIRTVASTGGVITAAGLIMAASMYGLVFASLGSVVQGAFVLGTGLLLDTFLVRTVTVPAIAVLVGQANWWLPSSWRPATWWPLGRRRGRAQRTKRKPLLPKEEEEQSPPDDDDLIGLWLHDGLRL</sequence>
<keyword id="KW-0997">Cell inner membrane</keyword>
<keyword id="KW-1003">Cell membrane</keyword>
<keyword id="KW-0961">Cell wall biogenesis/degradation</keyword>
<keyword id="KW-0445">Lipid transport</keyword>
<keyword id="KW-0472">Membrane</keyword>
<keyword id="KW-1185">Reference proteome</keyword>
<keyword id="KW-0812">Transmembrane</keyword>
<keyword id="KW-1133">Transmembrane helix</keyword>
<keyword id="KW-0813">Transport</keyword>
<organism>
    <name type="scientific">Mycobacterium tuberculosis (strain ATCC 25618 / H37Rv)</name>
    <dbReference type="NCBI Taxonomy" id="83332"/>
    <lineage>
        <taxon>Bacteria</taxon>
        <taxon>Bacillati</taxon>
        <taxon>Actinomycetota</taxon>
        <taxon>Actinomycetes</taxon>
        <taxon>Mycobacteriales</taxon>
        <taxon>Mycobacteriaceae</taxon>
        <taxon>Mycobacterium</taxon>
        <taxon>Mycobacterium tuberculosis complex</taxon>
    </lineage>
</organism>
<reference key="1">
    <citation type="journal article" date="1998" name="Nature">
        <title>Deciphering the biology of Mycobacterium tuberculosis from the complete genome sequence.</title>
        <authorList>
            <person name="Cole S.T."/>
            <person name="Brosch R."/>
            <person name="Parkhill J."/>
            <person name="Garnier T."/>
            <person name="Churcher C.M."/>
            <person name="Harris D.E."/>
            <person name="Gordon S.V."/>
            <person name="Eiglmeier K."/>
            <person name="Gas S."/>
            <person name="Barry C.E. III"/>
            <person name="Tekaia F."/>
            <person name="Badcock K."/>
            <person name="Basham D."/>
            <person name="Brown D."/>
            <person name="Chillingworth T."/>
            <person name="Connor R."/>
            <person name="Davies R.M."/>
            <person name="Devlin K."/>
            <person name="Feltwell T."/>
            <person name="Gentles S."/>
            <person name="Hamlin N."/>
            <person name="Holroyd S."/>
            <person name="Hornsby T."/>
            <person name="Jagels K."/>
            <person name="Krogh A."/>
            <person name="McLean J."/>
            <person name="Moule S."/>
            <person name="Murphy L.D."/>
            <person name="Oliver S."/>
            <person name="Osborne J."/>
            <person name="Quail M.A."/>
            <person name="Rajandream M.A."/>
            <person name="Rogers J."/>
            <person name="Rutter S."/>
            <person name="Seeger K."/>
            <person name="Skelton S."/>
            <person name="Squares S."/>
            <person name="Squares R."/>
            <person name="Sulston J.E."/>
            <person name="Taylor K."/>
            <person name="Whitehead S."/>
            <person name="Barrell B.G."/>
        </authorList>
    </citation>
    <scope>NUCLEOTIDE SEQUENCE [LARGE SCALE GENOMIC DNA]</scope>
    <source>
        <strain>ATCC 25618 / H37Rv</strain>
    </source>
</reference>
<reference key="2">
    <citation type="journal article" date="2003" name="Proc. Natl. Acad. Sci. U.S.A.">
        <title>MmpL8 is required for sulfolipid-1 biosynthesis and Mycobacterium tuberculosis virulence.</title>
        <authorList>
            <person name="Converse S.E."/>
            <person name="Mougous J.D."/>
            <person name="Leavell M.D."/>
            <person name="Leary J.A."/>
            <person name="Bertozzi C.R."/>
            <person name="Cox J.S."/>
        </authorList>
    </citation>
    <scope>FUNCTION IN SULFOLIPID-1 BIOSYNTHESIS AND VIRULENCE</scope>
    <scope>DISRUPTION PHENOTYPE</scope>
    <source>
        <strain>ATCC 35801 / TMC 107 / Erdman</strain>
    </source>
</reference>
<reference key="3">
    <citation type="journal article" date="2004" name="J. Biol. Chem.">
        <title>The role of MmpL8 in sulfatide biogenesis and virulence of Mycobacterium tuberculosis.</title>
        <authorList>
            <person name="Domenech P."/>
            <person name="Reed M.B."/>
            <person name="Dowd C.S."/>
            <person name="Manca C."/>
            <person name="Kaplan G."/>
            <person name="Barry C.E. III"/>
        </authorList>
    </citation>
    <scope>FUNCTION IN SULFOLIPID-1 BIOSYNTHESIS AND VIRULENCE</scope>
    <scope>DISRUPTION PHENOTYPE</scope>
    <source>
        <strain>ATCC 25618 / H37Rv</strain>
    </source>
</reference>
<reference key="4">
    <citation type="journal article" date="2005" name="Infect. Immun.">
        <title>Contribution of the Mycobacterium tuberculosis MmpL protein family to virulence and drug resistance.</title>
        <authorList>
            <person name="Domenech P."/>
            <person name="Reed M.B."/>
            <person name="Barry C.E. III"/>
        </authorList>
    </citation>
    <scope>FUNCTION IN VIRULENCE</scope>
    <source>
        <strain>ATCC 25618 / H37Rv</strain>
    </source>
</reference>
<reference key="5">
    <citation type="journal article" date="2006" name="Mol. Microbiol.">
        <title>The Mycobacterium tuberculosis PhoPR two-component system regulates genes essential for virulence and complex lipid biosynthesis.</title>
        <authorList>
            <person name="Walters S.B."/>
            <person name="Dubnau E."/>
            <person name="Kolesnikova I."/>
            <person name="Laval F."/>
            <person name="Daffe M."/>
            <person name="Smith I."/>
        </authorList>
    </citation>
    <scope>REGULATION BY PHOP/PHOR</scope>
    <source>
        <strain>ATCC 25618 / H37Rv</strain>
    </source>
</reference>
<reference key="6">
    <citation type="journal article" date="2008" name="BMC Syst. Biol.">
        <title>targetTB: a target identification pipeline for Mycobacterium tuberculosis through an interactome, reactome and genome-scale structural analysis.</title>
        <authorList>
            <person name="Raman K."/>
            <person name="Yeturu K."/>
            <person name="Chandra N."/>
        </authorList>
    </citation>
    <scope>IDENTIFICATION AS A DRUG TARGET [LARGE SCALE ANALYSIS]</scope>
</reference>
<reference key="7">
    <citation type="journal article" date="2012" name="J. Biol. Chem.">
        <title>Elucidation and chemical modulation of sulfolipid-1 biosynthesis in Mycobacterium tuberculosis.</title>
        <authorList>
            <person name="Seeliger J.C."/>
            <person name="Holsclaw C.M."/>
            <person name="Schelle M.W."/>
            <person name="Botyanszki Z."/>
            <person name="Gilmore S.A."/>
            <person name="Tully S.E."/>
            <person name="Niederweis M."/>
            <person name="Cravatt B.F."/>
            <person name="Leary J.A."/>
            <person name="Bertozzi C.R."/>
        </authorList>
    </citation>
    <scope>FUNCTION IN SULFOLIPID-1 BIOSYNTHESIS AND TRANSPORT</scope>
    <scope>SUBCELLULAR LOCATION</scope>
    <source>
        <strain>ATCC 35801 / TMC 107 / Erdman</strain>
    </source>
</reference>
<evidence type="ECO:0000255" key="1"/>
<evidence type="ECO:0000256" key="2">
    <source>
        <dbReference type="SAM" id="MobiDB-lite"/>
    </source>
</evidence>
<evidence type="ECO:0000269" key="3">
    <source>
    </source>
</evidence>
<evidence type="ECO:0000269" key="4">
    <source>
    </source>
</evidence>
<evidence type="ECO:0000269" key="5">
    <source>
    </source>
</evidence>
<evidence type="ECO:0000269" key="6">
    <source>
    </source>
</evidence>
<evidence type="ECO:0000269" key="7">
    <source>
    </source>
</evidence>
<evidence type="ECO:0000269" key="8">
    <source>
    </source>
</evidence>
<evidence type="ECO:0000305" key="9"/>
<evidence type="ECO:0000305" key="10">
    <source>
    </source>
</evidence>
<name>MMPL8_MYCTU</name>
<protein>
    <recommendedName>
        <fullName evidence="9">Sulfolipid-1 exporter MmpL8</fullName>
    </recommendedName>
</protein>
<comment type="function">
    <text evidence="3 4 5 8">Required for the biosynthesis and the transport across the inner membrane of sulfolipid-1 (SL-1), which is a major cell wall lipid of pathogenic mycobacteria. Could also transport SL1278 (2-palmitoyl-3-(C43)-phthioceranyl-alpha, alpha'-D-trehalose-2'-sulfate), which is the precursor of SL-1. Required for virulence.</text>
</comment>
<comment type="subcellular location">
    <subcellularLocation>
        <location evidence="10">Cell inner membrane</location>
        <topology evidence="1">Multi-pass membrane protein</topology>
    </subcellularLocation>
</comment>
<comment type="induction">
    <text evidence="6">Up-regulated by the PhoP/PhoR two-component system.</text>
</comment>
<comment type="disruption phenotype">
    <text evidence="3 4">Cells show attenuated virulence in murine survival studies although initial replication rates and containment of this replication in the lung and spleen are identical to the wild-type. Inactivation of the mmpL8 gene interrupts the normal biosynthesis of SL-1 and leads to the accumulation of the precursor SL1278.</text>
</comment>
<comment type="miscellaneous">
    <text evidence="7">Was identified as a high-confidence drug target.</text>
</comment>
<comment type="similarity">
    <text evidence="9">Belongs to the resistance-nodulation-cell division (RND) (TC 2.A.6) family. MmpL subfamily.</text>
</comment>